<name>CLPP_BOVIN</name>
<protein>
    <recommendedName>
        <fullName>ATP-dependent Clp protease proteolytic subunit, mitochondrial</fullName>
        <ecNumber evidence="3">3.4.21.92</ecNumber>
    </recommendedName>
    <alternativeName>
        <fullName>Endopeptidase Clp</fullName>
    </alternativeName>
</protein>
<comment type="function">
    <text evidence="3">Protease component of the ClpXP complex that cleaves peptides and various proteins in an ATP-dependent process. Has low peptidase activity in the absence of CLPX. The ClpXP complex can degrade CSN1S1, CSN2 and CSN3, as well as synthetic peptides (in vitro) and may be responsible for a fairly general and central housekeeping function rather than for the degradation of specific substrates. Cleaves PINK1 in the mitochondrion.</text>
</comment>
<comment type="catalytic activity">
    <reaction evidence="3">
        <text>Hydrolysis of proteins to small peptides in the presence of ATP and magnesium. alpha-casein is the usual test substrate. In the absence of ATP, only oligopeptides shorter than five residues are hydrolyzed (such as succinyl-Leu-Tyr-|-NHMec, and Leu-Tyr-Leu-|-Tyr-Trp, in which cleavage of the -Tyr-|-Leu- and -Tyr-|-Trp bonds also occurs).</text>
        <dbReference type="EC" id="3.4.21.92"/>
    </reaction>
</comment>
<comment type="subunit">
    <text evidence="3">Fourteen CLPP subunits assemble into 2 heptameric rings which stack back to back to give a disk-like structure with a central cavity. Component of the ClpXP complex formed by the assembly of two CLPP heptameric rings with two CLPX hexameric rings, giving rise to a symmetrical structure with two central CLPP rings flanked by a CLPX ring at either end of the complex.</text>
</comment>
<comment type="subcellular location">
    <subcellularLocation>
        <location evidence="3">Mitochondrion matrix</location>
    </subcellularLocation>
</comment>
<comment type="similarity">
    <text evidence="5">Belongs to the peptidase S14 family.</text>
</comment>
<evidence type="ECO:0000250" key="1"/>
<evidence type="ECO:0000250" key="2">
    <source>
        <dbReference type="UniProtKB" id="O88696"/>
    </source>
</evidence>
<evidence type="ECO:0000250" key="3">
    <source>
        <dbReference type="UniProtKB" id="Q16740"/>
    </source>
</evidence>
<evidence type="ECO:0000256" key="4">
    <source>
        <dbReference type="SAM" id="MobiDB-lite"/>
    </source>
</evidence>
<evidence type="ECO:0000305" key="5"/>
<keyword id="KW-0007">Acetylation</keyword>
<keyword id="KW-0378">Hydrolase</keyword>
<keyword id="KW-0496">Mitochondrion</keyword>
<keyword id="KW-0645">Protease</keyword>
<keyword id="KW-1185">Reference proteome</keyword>
<keyword id="KW-0720">Serine protease</keyword>
<keyword id="KW-0809">Transit peptide</keyword>
<reference key="1">
    <citation type="submission" date="2006-01" db="EMBL/GenBank/DDBJ databases">
        <authorList>
            <consortium name="NIH - Mammalian Gene Collection (MGC) project"/>
        </authorList>
    </citation>
    <scope>NUCLEOTIDE SEQUENCE [LARGE SCALE MRNA]</scope>
    <source>
        <strain>Hereford</strain>
        <tissue>Heart ventricle</tissue>
    </source>
</reference>
<proteinExistence type="evidence at transcript level"/>
<dbReference type="EC" id="3.4.21.92" evidence="3"/>
<dbReference type="EMBL" id="BC112880">
    <property type="protein sequence ID" value="AAI12881.1"/>
    <property type="molecule type" value="mRNA"/>
</dbReference>
<dbReference type="RefSeq" id="NP_001039879.1">
    <property type="nucleotide sequence ID" value="NM_001046414.2"/>
</dbReference>
<dbReference type="SMR" id="Q2KHU4"/>
<dbReference type="FunCoup" id="Q2KHU4">
    <property type="interactions" value="2591"/>
</dbReference>
<dbReference type="STRING" id="9913.ENSBTAP00000019577"/>
<dbReference type="MEROPS" id="S14.003"/>
<dbReference type="PaxDb" id="9913-ENSBTAP00000019577"/>
<dbReference type="PeptideAtlas" id="Q2KHU4"/>
<dbReference type="Ensembl" id="ENSBTAT00000107620.1">
    <property type="protein sequence ID" value="ENSBTAP00000075347.1"/>
    <property type="gene ID" value="ENSBTAG00000014712.5"/>
</dbReference>
<dbReference type="GeneID" id="535981"/>
<dbReference type="KEGG" id="bta:535981"/>
<dbReference type="CTD" id="8192"/>
<dbReference type="VEuPathDB" id="HostDB:ENSBTAG00000014712"/>
<dbReference type="VGNC" id="VGNC:27459">
    <property type="gene designation" value="CLPP"/>
</dbReference>
<dbReference type="eggNOG" id="KOG0840">
    <property type="taxonomic scope" value="Eukaryota"/>
</dbReference>
<dbReference type="GeneTree" id="ENSGT00390000005830"/>
<dbReference type="HOGENOM" id="CLU_058707_3_0_1"/>
<dbReference type="InParanoid" id="Q2KHU4"/>
<dbReference type="OMA" id="RDYWMKA"/>
<dbReference type="OrthoDB" id="2017408at2759"/>
<dbReference type="TreeFam" id="TF105002"/>
<dbReference type="Reactome" id="R-BTA-9837999">
    <property type="pathway name" value="Mitochondrial protein degradation"/>
</dbReference>
<dbReference type="Proteomes" id="UP000009136">
    <property type="component" value="Chromosome 7"/>
</dbReference>
<dbReference type="Bgee" id="ENSBTAG00000014712">
    <property type="expression patterns" value="Expressed in laryngeal cartilage and 104 other cell types or tissues"/>
</dbReference>
<dbReference type="GO" id="GO:0009368">
    <property type="term" value="C:endopeptidase Clp complex"/>
    <property type="evidence" value="ECO:0000250"/>
    <property type="project" value="UniProtKB"/>
</dbReference>
<dbReference type="GO" id="GO:0005759">
    <property type="term" value="C:mitochondrial matrix"/>
    <property type="evidence" value="ECO:0000250"/>
    <property type="project" value="UniProtKB"/>
</dbReference>
<dbReference type="GO" id="GO:0004176">
    <property type="term" value="F:ATP-dependent peptidase activity"/>
    <property type="evidence" value="ECO:0000318"/>
    <property type="project" value="GO_Central"/>
</dbReference>
<dbReference type="GO" id="GO:0051117">
    <property type="term" value="F:ATPase binding"/>
    <property type="evidence" value="ECO:0000318"/>
    <property type="project" value="GO_Central"/>
</dbReference>
<dbReference type="GO" id="GO:0004252">
    <property type="term" value="F:serine-type endopeptidase activity"/>
    <property type="evidence" value="ECO:0000250"/>
    <property type="project" value="UniProtKB"/>
</dbReference>
<dbReference type="GO" id="GO:0033619">
    <property type="term" value="P:membrane protein proteolysis"/>
    <property type="evidence" value="ECO:0007669"/>
    <property type="project" value="Ensembl"/>
</dbReference>
<dbReference type="GO" id="GO:0006515">
    <property type="term" value="P:protein quality control for misfolded or incompletely synthesized proteins"/>
    <property type="evidence" value="ECO:0000318"/>
    <property type="project" value="GO_Central"/>
</dbReference>
<dbReference type="GO" id="GO:0051603">
    <property type="term" value="P:proteolysis involved in protein catabolic process"/>
    <property type="evidence" value="ECO:0000250"/>
    <property type="project" value="UniProtKB"/>
</dbReference>
<dbReference type="CDD" id="cd07017">
    <property type="entry name" value="S14_ClpP_2"/>
    <property type="match status" value="1"/>
</dbReference>
<dbReference type="FunFam" id="3.90.226.10:FF:000001">
    <property type="entry name" value="ATP-dependent Clp protease proteolytic subunit"/>
    <property type="match status" value="1"/>
</dbReference>
<dbReference type="Gene3D" id="3.90.226.10">
    <property type="entry name" value="2-enoyl-CoA Hydratase, Chain A, domain 1"/>
    <property type="match status" value="1"/>
</dbReference>
<dbReference type="HAMAP" id="MF_00444">
    <property type="entry name" value="ClpP"/>
    <property type="match status" value="1"/>
</dbReference>
<dbReference type="InterPro" id="IPR001907">
    <property type="entry name" value="ClpP"/>
</dbReference>
<dbReference type="InterPro" id="IPR029045">
    <property type="entry name" value="ClpP/crotonase-like_dom_sf"/>
</dbReference>
<dbReference type="InterPro" id="IPR023562">
    <property type="entry name" value="ClpP/TepA"/>
</dbReference>
<dbReference type="InterPro" id="IPR033135">
    <property type="entry name" value="ClpP_His_AS"/>
</dbReference>
<dbReference type="InterPro" id="IPR018215">
    <property type="entry name" value="ClpP_Ser_AS"/>
</dbReference>
<dbReference type="NCBIfam" id="NF001368">
    <property type="entry name" value="PRK00277.1"/>
    <property type="match status" value="1"/>
</dbReference>
<dbReference type="NCBIfam" id="NF009205">
    <property type="entry name" value="PRK12553.1"/>
    <property type="match status" value="1"/>
</dbReference>
<dbReference type="PANTHER" id="PTHR10381">
    <property type="entry name" value="ATP-DEPENDENT CLP PROTEASE PROTEOLYTIC SUBUNIT"/>
    <property type="match status" value="1"/>
</dbReference>
<dbReference type="PANTHER" id="PTHR10381:SF11">
    <property type="entry name" value="ATP-DEPENDENT CLP PROTEASE PROTEOLYTIC SUBUNIT, MITOCHONDRIAL"/>
    <property type="match status" value="1"/>
</dbReference>
<dbReference type="Pfam" id="PF00574">
    <property type="entry name" value="CLP_protease"/>
    <property type="match status" value="1"/>
</dbReference>
<dbReference type="PRINTS" id="PR00127">
    <property type="entry name" value="CLPPROTEASEP"/>
</dbReference>
<dbReference type="SUPFAM" id="SSF52096">
    <property type="entry name" value="ClpP/crotonase"/>
    <property type="match status" value="1"/>
</dbReference>
<dbReference type="PROSITE" id="PS00382">
    <property type="entry name" value="CLP_PROTEASE_HIS"/>
    <property type="match status" value="1"/>
</dbReference>
<dbReference type="PROSITE" id="PS00381">
    <property type="entry name" value="CLP_PROTEASE_SER"/>
    <property type="match status" value="1"/>
</dbReference>
<sequence>MWPKILLRGGRVAAGLCPALGPRLAARFPPQRTPENRLAPQRNLHATAARALPLIPIVVEQTGRGERAYDIYSRLLRERIVCVMGPIDDSVASLVIAQLLFLQSESNKKPIHMYINSPGGVVTSGLAIYDTMQYILNPICTWCVGQAASMGSLLLAAGTPGMRHSLPNSRIMIHQPSGGARGQATDIAIQAEEIMKLKKQLYSIYAKHTKQSLQVIESAMERDRYMSPMEAQEFGILDKVLVHPPQDGEDEPELVQKEPGEPTAVEPAPASA</sequence>
<organism>
    <name type="scientific">Bos taurus</name>
    <name type="common">Bovine</name>
    <dbReference type="NCBI Taxonomy" id="9913"/>
    <lineage>
        <taxon>Eukaryota</taxon>
        <taxon>Metazoa</taxon>
        <taxon>Chordata</taxon>
        <taxon>Craniata</taxon>
        <taxon>Vertebrata</taxon>
        <taxon>Euteleostomi</taxon>
        <taxon>Mammalia</taxon>
        <taxon>Eutheria</taxon>
        <taxon>Laurasiatheria</taxon>
        <taxon>Artiodactyla</taxon>
        <taxon>Ruminantia</taxon>
        <taxon>Pecora</taxon>
        <taxon>Bovidae</taxon>
        <taxon>Bovinae</taxon>
        <taxon>Bos</taxon>
    </lineage>
</organism>
<gene>
    <name type="primary">CLPP</name>
</gene>
<accession>Q2KHU4</accession>
<feature type="transit peptide" description="Mitochondrion" evidence="1">
    <location>
        <begin position="1"/>
        <end position="52"/>
    </location>
</feature>
<feature type="chain" id="PRO_0000260318" description="ATP-dependent Clp protease proteolytic subunit, mitochondrial">
    <location>
        <begin status="unknown"/>
        <end position="272"/>
    </location>
</feature>
<feature type="region of interest" description="Disordered" evidence="4">
    <location>
        <begin position="240"/>
        <end position="272"/>
    </location>
</feature>
<feature type="active site" description="Nucleophile" evidence="1">
    <location>
        <position position="149"/>
    </location>
</feature>
<feature type="active site" evidence="1">
    <location>
        <position position="174"/>
    </location>
</feature>
<feature type="modified residue" description="N6-succinyllysine" evidence="2">
    <location>
        <position position="196"/>
    </location>
</feature>
<feature type="modified residue" description="N6-acetyllysine" evidence="3">
    <location>
        <position position="207"/>
    </location>
</feature>